<name>RPO2_SACS2</name>
<keyword id="KW-0002">3D-structure</keyword>
<keyword id="KW-0963">Cytoplasm</keyword>
<keyword id="KW-0238">DNA-binding</keyword>
<keyword id="KW-0240">DNA-directed RNA polymerase</keyword>
<keyword id="KW-0479">Metal-binding</keyword>
<keyword id="KW-0548">Nucleotidyltransferase</keyword>
<keyword id="KW-1185">Reference proteome</keyword>
<keyword id="KW-0804">Transcription</keyword>
<keyword id="KW-0808">Transferase</keyword>
<keyword id="KW-0862">Zinc</keyword>
<dbReference type="EC" id="2.7.7.6" evidence="6"/>
<dbReference type="EMBL" id="AE006641">
    <property type="protein sequence ID" value="AAK40568.1"/>
    <property type="status" value="ALT_FRAME"/>
    <property type="molecule type" value="Genomic_DNA"/>
</dbReference>
<dbReference type="EMBL" id="AE006641">
    <property type="protein sequence ID" value="AAK40567.1"/>
    <property type="status" value="ALT_FRAME"/>
    <property type="molecule type" value="Genomic_DNA"/>
</dbReference>
<dbReference type="PIR" id="A99164">
    <property type="entry name" value="A99164"/>
</dbReference>
<dbReference type="PIR" id="H90163">
    <property type="entry name" value="H90163"/>
</dbReference>
<dbReference type="PDB" id="2PMZ">
    <property type="method" value="X-ray"/>
    <property type="resolution" value="3.40 A"/>
    <property type="chains" value="B/R=5-1124"/>
</dbReference>
<dbReference type="PDB" id="3HKZ">
    <property type="method" value="X-ray"/>
    <property type="resolution" value="3.40 A"/>
    <property type="chains" value="B/J=5-1119"/>
</dbReference>
<dbReference type="PDBsum" id="2PMZ"/>
<dbReference type="PDBsum" id="3HKZ"/>
<dbReference type="SMR" id="Q980R1"/>
<dbReference type="DIP" id="DIP-60640N"/>
<dbReference type="FunCoup" id="Q980R1">
    <property type="interactions" value="212"/>
</dbReference>
<dbReference type="IntAct" id="Q980R1">
    <property type="interactions" value="1"/>
</dbReference>
<dbReference type="STRING" id="273057.SSO3254"/>
<dbReference type="PaxDb" id="273057-SSO0227"/>
<dbReference type="EnsemblBacteria" id="AAK40567">
    <property type="protein sequence ID" value="AAK40567"/>
    <property type="gene ID" value="SSO0227"/>
</dbReference>
<dbReference type="EnsemblBacteria" id="AAK40568">
    <property type="protein sequence ID" value="AAK40568"/>
    <property type="gene ID" value="SSO3254"/>
</dbReference>
<dbReference type="KEGG" id="sso:SSO0227"/>
<dbReference type="KEGG" id="sso:SSO3254"/>
<dbReference type="PATRIC" id="fig|273057.12.peg.223"/>
<dbReference type="eggNOG" id="arCOG01762">
    <property type="taxonomic scope" value="Archaea"/>
</dbReference>
<dbReference type="HOGENOM" id="CLU_000524_2_2_2"/>
<dbReference type="InParanoid" id="Q980R1"/>
<dbReference type="PhylomeDB" id="Q980R1"/>
<dbReference type="BRENDA" id="2.7.7.6">
    <property type="organism ID" value="6163"/>
</dbReference>
<dbReference type="EvolutionaryTrace" id="Q980R1"/>
<dbReference type="Proteomes" id="UP000001974">
    <property type="component" value="Chromosome"/>
</dbReference>
<dbReference type="GO" id="GO:0005737">
    <property type="term" value="C:cytoplasm"/>
    <property type="evidence" value="ECO:0007669"/>
    <property type="project" value="UniProtKB-SubCell"/>
</dbReference>
<dbReference type="GO" id="GO:0000428">
    <property type="term" value="C:DNA-directed RNA polymerase complex"/>
    <property type="evidence" value="ECO:0000314"/>
    <property type="project" value="UniProtKB"/>
</dbReference>
<dbReference type="GO" id="GO:0003677">
    <property type="term" value="F:DNA binding"/>
    <property type="evidence" value="ECO:0007669"/>
    <property type="project" value="UniProtKB-KW"/>
</dbReference>
<dbReference type="GO" id="GO:0003899">
    <property type="term" value="F:DNA-directed RNA polymerase activity"/>
    <property type="evidence" value="ECO:0007669"/>
    <property type="project" value="UniProtKB-EC"/>
</dbReference>
<dbReference type="GO" id="GO:0032549">
    <property type="term" value="F:ribonucleoside binding"/>
    <property type="evidence" value="ECO:0007669"/>
    <property type="project" value="InterPro"/>
</dbReference>
<dbReference type="GO" id="GO:0008270">
    <property type="term" value="F:zinc ion binding"/>
    <property type="evidence" value="ECO:0007669"/>
    <property type="project" value="InterPro"/>
</dbReference>
<dbReference type="GO" id="GO:0006351">
    <property type="term" value="P:DNA-templated transcription"/>
    <property type="evidence" value="ECO:0007669"/>
    <property type="project" value="InterPro"/>
</dbReference>
<dbReference type="CDD" id="cd00653">
    <property type="entry name" value="RNA_pol_B_RPB2"/>
    <property type="match status" value="1"/>
</dbReference>
<dbReference type="FunFam" id="2.40.270.10:FF:000006">
    <property type="entry name" value="DNA-directed RNA polymerase subunit beta"/>
    <property type="match status" value="1"/>
</dbReference>
<dbReference type="FunFam" id="3.90.1800.10:FF:000002">
    <property type="entry name" value="DNA-directed RNA polymerase subunit beta"/>
    <property type="match status" value="1"/>
</dbReference>
<dbReference type="Gene3D" id="2.40.50.150">
    <property type="match status" value="1"/>
</dbReference>
<dbReference type="Gene3D" id="3.90.1070.20">
    <property type="match status" value="1"/>
</dbReference>
<dbReference type="Gene3D" id="3.90.1100.10">
    <property type="match status" value="1"/>
</dbReference>
<dbReference type="Gene3D" id="2.40.270.10">
    <property type="entry name" value="DNA-directed RNA polymerase, subunit 2, domain 6"/>
    <property type="match status" value="1"/>
</dbReference>
<dbReference type="Gene3D" id="3.90.1800.10">
    <property type="entry name" value="RNA polymerase alpha subunit dimerisation domain"/>
    <property type="match status" value="1"/>
</dbReference>
<dbReference type="Gene3D" id="3.90.1110.10">
    <property type="entry name" value="RNA polymerase Rpb2, domain 2"/>
    <property type="match status" value="1"/>
</dbReference>
<dbReference type="InterPro" id="IPR015712">
    <property type="entry name" value="DNA-dir_RNA_pol_su2"/>
</dbReference>
<dbReference type="InterPro" id="IPR007120">
    <property type="entry name" value="DNA-dir_RNAP_su2_dom"/>
</dbReference>
<dbReference type="InterPro" id="IPR037033">
    <property type="entry name" value="DNA-dir_RNAP_su2_hyb_sf"/>
</dbReference>
<dbReference type="InterPro" id="IPR007121">
    <property type="entry name" value="RNA_pol_bsu_CS"/>
</dbReference>
<dbReference type="InterPro" id="IPR007644">
    <property type="entry name" value="RNA_pol_bsu_protrusion"/>
</dbReference>
<dbReference type="InterPro" id="IPR007642">
    <property type="entry name" value="RNA_pol_Rpb2_2"/>
</dbReference>
<dbReference type="InterPro" id="IPR037034">
    <property type="entry name" value="RNA_pol_Rpb2_2_sf"/>
</dbReference>
<dbReference type="InterPro" id="IPR007645">
    <property type="entry name" value="RNA_pol_Rpb2_3"/>
</dbReference>
<dbReference type="InterPro" id="IPR007646">
    <property type="entry name" value="RNA_pol_Rpb2_4"/>
</dbReference>
<dbReference type="InterPro" id="IPR007647">
    <property type="entry name" value="RNA_pol_Rpb2_5"/>
</dbReference>
<dbReference type="InterPro" id="IPR007641">
    <property type="entry name" value="RNA_pol_Rpb2_7"/>
</dbReference>
<dbReference type="InterPro" id="IPR014724">
    <property type="entry name" value="RNA_pol_RPB2_OB-fold"/>
</dbReference>
<dbReference type="InterPro" id="IPR019969">
    <property type="entry name" value="RNAP_Rpo2"/>
</dbReference>
<dbReference type="NCBIfam" id="NF006335">
    <property type="entry name" value="PRK08565.1"/>
    <property type="match status" value="1"/>
</dbReference>
<dbReference type="NCBIfam" id="NF007175">
    <property type="entry name" value="PRK09606.1"/>
    <property type="match status" value="1"/>
</dbReference>
<dbReference type="NCBIfam" id="TIGR03670">
    <property type="entry name" value="rpoB_arch"/>
    <property type="match status" value="1"/>
</dbReference>
<dbReference type="PANTHER" id="PTHR20856">
    <property type="entry name" value="DNA-DIRECTED RNA POLYMERASE I SUBUNIT 2"/>
    <property type="match status" value="1"/>
</dbReference>
<dbReference type="Pfam" id="PF04563">
    <property type="entry name" value="RNA_pol_Rpb2_1"/>
    <property type="match status" value="1"/>
</dbReference>
<dbReference type="Pfam" id="PF04561">
    <property type="entry name" value="RNA_pol_Rpb2_2"/>
    <property type="match status" value="1"/>
</dbReference>
<dbReference type="Pfam" id="PF04565">
    <property type="entry name" value="RNA_pol_Rpb2_3"/>
    <property type="match status" value="1"/>
</dbReference>
<dbReference type="Pfam" id="PF04566">
    <property type="entry name" value="RNA_pol_Rpb2_4"/>
    <property type="match status" value="1"/>
</dbReference>
<dbReference type="Pfam" id="PF04567">
    <property type="entry name" value="RNA_pol_Rpb2_5"/>
    <property type="match status" value="1"/>
</dbReference>
<dbReference type="Pfam" id="PF00562">
    <property type="entry name" value="RNA_pol_Rpb2_6"/>
    <property type="match status" value="1"/>
</dbReference>
<dbReference type="Pfam" id="PF04560">
    <property type="entry name" value="RNA_pol_Rpb2_7"/>
    <property type="match status" value="1"/>
</dbReference>
<dbReference type="SUPFAM" id="SSF64484">
    <property type="entry name" value="beta and beta-prime subunits of DNA dependent RNA-polymerase"/>
    <property type="match status" value="1"/>
</dbReference>
<dbReference type="PROSITE" id="PS01166">
    <property type="entry name" value="RNA_POL_BETA"/>
    <property type="match status" value="1"/>
</dbReference>
<feature type="chain" id="PRO_0000453793" description="DNA-directed RNA polymerase subunit Rpo2">
    <location>
        <begin position="1"/>
        <end position="1124"/>
    </location>
</feature>
<feature type="binding site" evidence="2 7 8">
    <location>
        <position position="1061"/>
    </location>
    <ligand>
        <name>Zn(2+)</name>
        <dbReference type="ChEBI" id="CHEBI:29105"/>
    </ligand>
</feature>
<feature type="binding site" evidence="2 7 8">
    <location>
        <position position="1064"/>
    </location>
    <ligand>
        <name>Zn(2+)</name>
        <dbReference type="ChEBI" id="CHEBI:29105"/>
    </ligand>
</feature>
<feature type="binding site" evidence="2 7 8">
    <location>
        <position position="1079"/>
    </location>
    <ligand>
        <name>Zn(2+)</name>
        <dbReference type="ChEBI" id="CHEBI:29105"/>
    </ligand>
</feature>
<feature type="binding site" evidence="1">
    <location>
        <position position="1082"/>
    </location>
    <ligand>
        <name>Zn(2+)</name>
        <dbReference type="ChEBI" id="CHEBI:29105"/>
    </ligand>
</feature>
<feature type="helix" evidence="9">
    <location>
        <begin position="8"/>
        <end position="18"/>
    </location>
</feature>
<feature type="helix" evidence="9">
    <location>
        <begin position="28"/>
        <end position="36"/>
    </location>
</feature>
<feature type="turn" evidence="9">
    <location>
        <begin position="40"/>
        <end position="43"/>
    </location>
</feature>
<feature type="turn" evidence="9">
    <location>
        <begin position="53"/>
        <end position="55"/>
    </location>
</feature>
<feature type="strand" evidence="9">
    <location>
        <begin position="57"/>
        <end position="60"/>
    </location>
</feature>
<feature type="strand" evidence="9">
    <location>
        <begin position="73"/>
        <end position="75"/>
    </location>
</feature>
<feature type="helix" evidence="9">
    <location>
        <begin position="82"/>
        <end position="85"/>
    </location>
</feature>
<feature type="turn" evidence="9">
    <location>
        <begin position="86"/>
        <end position="89"/>
    </location>
</feature>
<feature type="strand" evidence="10">
    <location>
        <begin position="93"/>
        <end position="96"/>
    </location>
</feature>
<feature type="strand" evidence="9">
    <location>
        <begin position="99"/>
        <end position="106"/>
    </location>
</feature>
<feature type="strand" evidence="10">
    <location>
        <begin position="118"/>
        <end position="120"/>
    </location>
</feature>
<feature type="strand" evidence="10">
    <location>
        <begin position="126"/>
        <end position="128"/>
    </location>
</feature>
<feature type="helix" evidence="9">
    <location>
        <begin position="129"/>
        <end position="132"/>
    </location>
</feature>
<feature type="helix" evidence="9">
    <location>
        <begin position="135"/>
        <end position="141"/>
    </location>
</feature>
<feature type="helix" evidence="9">
    <location>
        <begin position="154"/>
        <end position="156"/>
    </location>
</feature>
<feature type="strand" evidence="9">
    <location>
        <begin position="159"/>
        <end position="161"/>
    </location>
</feature>
<feature type="strand" evidence="9">
    <location>
        <begin position="169"/>
        <end position="175"/>
    </location>
</feature>
<feature type="strand" evidence="9">
    <location>
        <begin position="181"/>
        <end position="183"/>
    </location>
</feature>
<feature type="strand" evidence="9">
    <location>
        <begin position="186"/>
        <end position="191"/>
    </location>
</feature>
<feature type="strand" evidence="9">
    <location>
        <begin position="194"/>
        <end position="196"/>
    </location>
</feature>
<feature type="strand" evidence="9">
    <location>
        <begin position="201"/>
        <end position="206"/>
    </location>
</feature>
<feature type="turn" evidence="9">
    <location>
        <begin position="207"/>
        <end position="210"/>
    </location>
</feature>
<feature type="strand" evidence="9">
    <location>
        <begin position="211"/>
        <end position="213"/>
    </location>
</feature>
<feature type="strand" evidence="9">
    <location>
        <begin position="215"/>
        <end position="217"/>
    </location>
</feature>
<feature type="strand" evidence="9">
    <location>
        <begin position="219"/>
        <end position="222"/>
    </location>
</feature>
<feature type="helix" evidence="9">
    <location>
        <begin position="223"/>
        <end position="229"/>
    </location>
</feature>
<feature type="helix" evidence="9">
    <location>
        <begin position="235"/>
        <end position="242"/>
    </location>
</feature>
<feature type="helix" evidence="9">
    <location>
        <begin position="250"/>
        <end position="252"/>
    </location>
</feature>
<feature type="helix" evidence="9">
    <location>
        <begin position="255"/>
        <end position="258"/>
    </location>
</feature>
<feature type="strand" evidence="9">
    <location>
        <begin position="264"/>
        <end position="266"/>
    </location>
</feature>
<feature type="turn" evidence="9">
    <location>
        <begin position="267"/>
        <end position="269"/>
    </location>
</feature>
<feature type="helix" evidence="9">
    <location>
        <begin position="270"/>
        <end position="273"/>
    </location>
</feature>
<feature type="helix" evidence="9">
    <location>
        <begin position="282"/>
        <end position="284"/>
    </location>
</feature>
<feature type="helix" evidence="9">
    <location>
        <begin position="287"/>
        <end position="294"/>
    </location>
</feature>
<feature type="strand" evidence="9">
    <location>
        <begin position="295"/>
        <end position="297"/>
    </location>
</feature>
<feature type="turn" evidence="10">
    <location>
        <begin position="305"/>
        <end position="308"/>
    </location>
</feature>
<feature type="helix" evidence="9">
    <location>
        <begin position="309"/>
        <end position="311"/>
    </location>
</feature>
<feature type="helix" evidence="9">
    <location>
        <begin position="312"/>
        <end position="322"/>
    </location>
</feature>
<feature type="turn" evidence="9">
    <location>
        <begin position="323"/>
        <end position="327"/>
    </location>
</feature>
<feature type="helix" evidence="9">
    <location>
        <begin position="346"/>
        <end position="372"/>
    </location>
</feature>
<feature type="strand" evidence="9">
    <location>
        <begin position="374"/>
        <end position="377"/>
    </location>
</feature>
<feature type="helix" evidence="9">
    <location>
        <begin position="381"/>
        <end position="383"/>
    </location>
</feature>
<feature type="turn" evidence="9">
    <location>
        <begin position="387"/>
        <end position="391"/>
    </location>
</feature>
<feature type="helix" evidence="9">
    <location>
        <begin position="392"/>
        <end position="395"/>
    </location>
</feature>
<feature type="turn" evidence="9">
    <location>
        <begin position="396"/>
        <end position="398"/>
    </location>
</feature>
<feature type="strand" evidence="9">
    <location>
        <begin position="404"/>
        <end position="406"/>
    </location>
</feature>
<feature type="strand" evidence="9">
    <location>
        <begin position="411"/>
        <end position="413"/>
    </location>
</feature>
<feature type="helix" evidence="9">
    <location>
        <begin position="418"/>
        <end position="427"/>
    </location>
</feature>
<feature type="turn" evidence="9">
    <location>
        <begin position="450"/>
        <end position="452"/>
    </location>
</feature>
<feature type="turn" evidence="9">
    <location>
        <begin position="462"/>
        <end position="466"/>
    </location>
</feature>
<feature type="strand" evidence="9">
    <location>
        <begin position="476"/>
        <end position="478"/>
    </location>
</feature>
<feature type="turn" evidence="9">
    <location>
        <begin position="483"/>
        <end position="485"/>
    </location>
</feature>
<feature type="helix" evidence="9">
    <location>
        <begin position="486"/>
        <end position="490"/>
    </location>
</feature>
<feature type="turn" evidence="9">
    <location>
        <begin position="491"/>
        <end position="493"/>
    </location>
</feature>
<feature type="strand" evidence="9">
    <location>
        <begin position="495"/>
        <end position="497"/>
    </location>
</feature>
<feature type="strand" evidence="9">
    <location>
        <begin position="520"/>
        <end position="524"/>
    </location>
</feature>
<feature type="strand" evidence="10">
    <location>
        <begin position="526"/>
        <end position="529"/>
    </location>
</feature>
<feature type="helix" evidence="9">
    <location>
        <begin position="536"/>
        <end position="543"/>
    </location>
</feature>
<feature type="turn" evidence="9">
    <location>
        <begin position="544"/>
        <end position="547"/>
    </location>
</feature>
<feature type="strand" evidence="9">
    <location>
        <begin position="554"/>
        <end position="557"/>
    </location>
</feature>
<feature type="strand" evidence="9">
    <location>
        <begin position="566"/>
        <end position="569"/>
    </location>
</feature>
<feature type="strand" evidence="9">
    <location>
        <begin position="572"/>
        <end position="575"/>
    </location>
</feature>
<feature type="strand" evidence="9">
    <location>
        <begin position="577"/>
        <end position="581"/>
    </location>
</feature>
<feature type="strand" evidence="9">
    <location>
        <begin position="583"/>
        <end position="585"/>
    </location>
</feature>
<feature type="helix" evidence="9">
    <location>
        <begin position="591"/>
        <end position="595"/>
    </location>
</feature>
<feature type="helix" evidence="9">
    <location>
        <begin position="604"/>
        <end position="609"/>
    </location>
</feature>
<feature type="strand" evidence="9">
    <location>
        <begin position="612"/>
        <end position="616"/>
    </location>
</feature>
<feature type="helix" evidence="9">
    <location>
        <begin position="621"/>
        <end position="623"/>
    </location>
</feature>
<feature type="helix" evidence="9">
    <location>
        <begin position="630"/>
        <end position="633"/>
    </location>
</feature>
<feature type="turn" evidence="9">
    <location>
        <begin position="644"/>
        <end position="647"/>
    </location>
</feature>
<feature type="helix" evidence="9">
    <location>
        <begin position="651"/>
        <end position="653"/>
    </location>
</feature>
<feature type="helix" evidence="9">
    <location>
        <begin position="663"/>
        <end position="672"/>
    </location>
</feature>
<feature type="helix" evidence="9">
    <location>
        <begin position="673"/>
        <end position="675"/>
    </location>
</feature>
<feature type="turn" evidence="9">
    <location>
        <begin position="682"/>
        <end position="686"/>
    </location>
</feature>
<feature type="strand" evidence="9">
    <location>
        <begin position="690"/>
        <end position="693"/>
    </location>
</feature>
<feature type="strand" evidence="9">
    <location>
        <begin position="702"/>
        <end position="704"/>
    </location>
</feature>
<feature type="turn" evidence="9">
    <location>
        <begin position="707"/>
        <end position="711"/>
    </location>
</feature>
<feature type="helix" evidence="9">
    <location>
        <begin position="713"/>
        <end position="715"/>
    </location>
</feature>
<feature type="strand" evidence="9">
    <location>
        <begin position="718"/>
        <end position="722"/>
    </location>
</feature>
<feature type="turn" evidence="9">
    <location>
        <begin position="734"/>
        <end position="736"/>
    </location>
</feature>
<feature type="strand" evidence="9">
    <location>
        <begin position="740"/>
        <end position="742"/>
    </location>
</feature>
<feature type="helix" evidence="9">
    <location>
        <begin position="743"/>
        <end position="746"/>
    </location>
</feature>
<feature type="turn" evidence="9">
    <location>
        <begin position="747"/>
        <end position="750"/>
    </location>
</feature>
<feature type="strand" evidence="9">
    <location>
        <begin position="754"/>
        <end position="760"/>
    </location>
</feature>
<feature type="strand" evidence="9">
    <location>
        <begin position="765"/>
        <end position="768"/>
    </location>
</feature>
<feature type="strand" evidence="9">
    <location>
        <begin position="778"/>
        <end position="782"/>
    </location>
</feature>
<feature type="helix" evidence="9">
    <location>
        <begin position="789"/>
        <end position="791"/>
    </location>
</feature>
<feature type="strand" evidence="10">
    <location>
        <begin position="803"/>
        <end position="805"/>
    </location>
</feature>
<feature type="strand" evidence="9">
    <location>
        <begin position="809"/>
        <end position="811"/>
    </location>
</feature>
<feature type="strand" evidence="9">
    <location>
        <begin position="845"/>
        <end position="854"/>
    </location>
</feature>
<feature type="strand" evidence="9">
    <location>
        <begin position="860"/>
        <end position="867"/>
    </location>
</feature>
<feature type="strand" evidence="9">
    <location>
        <begin position="877"/>
        <end position="879"/>
    </location>
</feature>
<feature type="strand" evidence="10">
    <location>
        <begin position="887"/>
        <end position="892"/>
    </location>
</feature>
<feature type="turn" evidence="9">
    <location>
        <begin position="894"/>
        <end position="896"/>
    </location>
</feature>
<feature type="strand" evidence="9">
    <location>
        <begin position="897"/>
        <end position="899"/>
    </location>
</feature>
<feature type="strand" evidence="10">
    <location>
        <begin position="907"/>
        <end position="910"/>
    </location>
</feature>
<feature type="helix" evidence="9">
    <location>
        <begin position="912"/>
        <end position="914"/>
    </location>
</feature>
<feature type="helix" evidence="9">
    <location>
        <begin position="916"/>
        <end position="918"/>
    </location>
</feature>
<feature type="helix" evidence="9">
    <location>
        <begin position="923"/>
        <end position="931"/>
    </location>
</feature>
<feature type="strand" evidence="9">
    <location>
        <begin position="934"/>
        <end position="938"/>
    </location>
</feature>
<feature type="helix" evidence="9">
    <location>
        <begin position="950"/>
        <end position="959"/>
    </location>
</feature>
<feature type="strand" evidence="10">
    <location>
        <begin position="970"/>
        <end position="972"/>
    </location>
</feature>
<feature type="turn" evidence="9">
    <location>
        <begin position="973"/>
        <end position="975"/>
    </location>
</feature>
<feature type="strand" evidence="9">
    <location>
        <begin position="988"/>
        <end position="994"/>
    </location>
</feature>
<feature type="helix" evidence="9">
    <location>
        <begin position="997"/>
        <end position="999"/>
    </location>
</feature>
<feature type="turn" evidence="9">
    <location>
        <begin position="1011"/>
        <end position="1013"/>
    </location>
</feature>
<feature type="helix" evidence="9">
    <location>
        <begin position="1020"/>
        <end position="1022"/>
    </location>
</feature>
<feature type="strand" evidence="9">
    <location>
        <begin position="1027"/>
        <end position="1029"/>
    </location>
</feature>
<feature type="helix" evidence="9">
    <location>
        <begin position="1030"/>
        <end position="1032"/>
    </location>
</feature>
<feature type="helix" evidence="9">
    <location>
        <begin position="1034"/>
        <end position="1037"/>
    </location>
</feature>
<feature type="turn" evidence="9">
    <location>
        <begin position="1038"/>
        <end position="1040"/>
    </location>
</feature>
<feature type="turn" evidence="9">
    <location>
        <begin position="1042"/>
        <end position="1053"/>
    </location>
</feature>
<feature type="strand" evidence="9">
    <location>
        <begin position="1057"/>
        <end position="1061"/>
    </location>
</feature>
<feature type="turn" evidence="9">
    <location>
        <begin position="1062"/>
        <end position="1064"/>
    </location>
</feature>
<feature type="helix" evidence="9">
    <location>
        <begin position="1073"/>
        <end position="1075"/>
    </location>
</feature>
<feature type="turn" evidence="9">
    <location>
        <begin position="1083"/>
        <end position="1086"/>
    </location>
</feature>
<feature type="strand" evidence="9">
    <location>
        <begin position="1088"/>
        <end position="1092"/>
    </location>
</feature>
<feature type="helix" evidence="9">
    <location>
        <begin position="1095"/>
        <end position="1106"/>
    </location>
</feature>
<comment type="function">
    <text evidence="1 6">DNA-dependent RNA polymerase (RNAP) catalyzes the transcription of DNA into RNA using the four ribonucleoside triphosphates as substrates (Probable). This subunit is involved in DNA promoter recognition (By similarity).</text>
</comment>
<comment type="catalytic activity">
    <reaction evidence="6">
        <text>RNA(n) + a ribonucleoside 5'-triphosphate = RNA(n+1) + diphosphate</text>
        <dbReference type="Rhea" id="RHEA:21248"/>
        <dbReference type="Rhea" id="RHEA-COMP:14527"/>
        <dbReference type="Rhea" id="RHEA-COMP:17342"/>
        <dbReference type="ChEBI" id="CHEBI:33019"/>
        <dbReference type="ChEBI" id="CHEBI:61557"/>
        <dbReference type="ChEBI" id="CHEBI:140395"/>
        <dbReference type="EC" id="2.7.7.6"/>
    </reaction>
</comment>
<comment type="cofactor">
    <cofactor evidence="2">
        <name>Zn(2+)</name>
        <dbReference type="ChEBI" id="CHEBI:29105"/>
    </cofactor>
    <text evidence="2">Binds 1 Zn(2+) per subunit.</text>
</comment>
<comment type="subunit">
    <text evidence="2">Part of the 13-subunit RNA polymerase complex.</text>
</comment>
<comment type="subcellular location">
    <subcellularLocation>
        <location evidence="1">Cytoplasm</location>
    </subcellularLocation>
</comment>
<comment type="similarity">
    <text evidence="5">Belongs to the RNA polymerase beta chain family.</text>
</comment>
<comment type="sequence caution" evidence="5">
    <conflict type="frameshift">
        <sequence resource="EMBL-CDS" id="AAK40567"/>
    </conflict>
</comment>
<comment type="sequence caution" evidence="5">
    <conflict type="frameshift">
        <sequence resource="EMBL-CDS" id="AAK40568"/>
    </conflict>
</comment>
<organism>
    <name type="scientific">Saccharolobus solfataricus (strain ATCC 35092 / DSM 1617 / JCM 11322 / P2)</name>
    <name type="common">Sulfolobus solfataricus</name>
    <dbReference type="NCBI Taxonomy" id="273057"/>
    <lineage>
        <taxon>Archaea</taxon>
        <taxon>Thermoproteota</taxon>
        <taxon>Thermoprotei</taxon>
        <taxon>Sulfolobales</taxon>
        <taxon>Sulfolobaceae</taxon>
        <taxon>Saccharolobus</taxon>
    </lineage>
</organism>
<proteinExistence type="evidence at protein level"/>
<gene>
    <name evidence="5" type="primary">rpo2</name>
    <name evidence="3" type="synonym">rpoB1</name>
    <name evidence="3" type="synonym">rpoB2</name>
    <name type="ordered locus">SSO0227/SSO3254</name>
</gene>
<protein>
    <recommendedName>
        <fullName evidence="5">DNA-directed RNA polymerase subunit Rpo2</fullName>
        <ecNumber evidence="6">2.7.7.6</ecNumber>
    </recommendedName>
    <alternativeName>
        <fullName evidence="4">DNA-directed RNA polymerase subunit B</fullName>
    </alternativeName>
</protein>
<reference key="1">
    <citation type="journal article" date="2001" name="Proc. Natl. Acad. Sci. U.S.A.">
        <title>The complete genome of the crenarchaeon Sulfolobus solfataricus P2.</title>
        <authorList>
            <person name="She Q."/>
            <person name="Singh R.K."/>
            <person name="Confalonieri F."/>
            <person name="Zivanovic Y."/>
            <person name="Allard G."/>
            <person name="Awayez M.J."/>
            <person name="Chan-Weiher C.C.-Y."/>
            <person name="Clausen I.G."/>
            <person name="Curtis B.A."/>
            <person name="De Moors A."/>
            <person name="Erauso G."/>
            <person name="Fletcher C."/>
            <person name="Gordon P.M.K."/>
            <person name="Heikamp-de Jong I."/>
            <person name="Jeffries A.C."/>
            <person name="Kozera C.J."/>
            <person name="Medina N."/>
            <person name="Peng X."/>
            <person name="Thi-Ngoc H.P."/>
            <person name="Redder P."/>
            <person name="Schenk M.E."/>
            <person name="Theriault C."/>
            <person name="Tolstrup N."/>
            <person name="Charlebois R.L."/>
            <person name="Doolittle W.F."/>
            <person name="Duguet M."/>
            <person name="Gaasterland T."/>
            <person name="Garrett R.A."/>
            <person name="Ragan M.A."/>
            <person name="Sensen C.W."/>
            <person name="Van der Oost J."/>
        </authorList>
    </citation>
    <scope>NUCLEOTIDE SEQUENCE [LARGE SCALE GENOMIC DNA]</scope>
    <source>
        <strain>ATCC 35092 / DSM 1617 / JCM 11322 / P2</strain>
    </source>
</reference>
<reference evidence="7 8" key="2">
    <citation type="journal article" date="2008" name="Nature">
        <title>The X-ray crystal structure of RNA polymerase from Archaea.</title>
        <authorList>
            <person name="Hirata A."/>
            <person name="Klein B.J."/>
            <person name="Murakami K.S."/>
        </authorList>
    </citation>
    <scope>X-RAY CRYSTALLOGRAPHY (3.40 ANGSTROMS) OF 479-1124 OF THE RNA POLYMERASE COMPLEX IN COMPLEX WITH ZINC</scope>
    <scope>SEQUENCE REVISION</scope>
    <scope>FUNCTION</scope>
    <scope>COFACTOR</scope>
    <scope>SUBUNIT</scope>
    <source>
        <strain>ATCC 35092 / DSM 1617 / JCM 11322 / P2</strain>
    </source>
</reference>
<evidence type="ECO:0000250" key="1">
    <source>
        <dbReference type="UniProtKB" id="B8YB55"/>
    </source>
</evidence>
<evidence type="ECO:0000269" key="2">
    <source>
    </source>
</evidence>
<evidence type="ECO:0000303" key="3">
    <source>
    </source>
</evidence>
<evidence type="ECO:0000303" key="4">
    <source>
    </source>
</evidence>
<evidence type="ECO:0000305" key="5"/>
<evidence type="ECO:0000305" key="6">
    <source>
    </source>
</evidence>
<evidence type="ECO:0007744" key="7">
    <source>
        <dbReference type="PDB" id="2PMZ"/>
    </source>
</evidence>
<evidence type="ECO:0007744" key="8">
    <source>
        <dbReference type="PDB" id="3HKZ"/>
    </source>
</evidence>
<evidence type="ECO:0007829" key="9">
    <source>
        <dbReference type="PDB" id="2PMZ"/>
    </source>
</evidence>
<evidence type="ECO:0007829" key="10">
    <source>
        <dbReference type="PDB" id="3HKZ"/>
    </source>
</evidence>
<accession>Q980R1</accession>
<accession>Q980R0</accession>
<sequence length="1124" mass="126552">MASNLTIDERWRVIEAYFKSKGLVRQHLDSYNDFVRNKLQEIIDEQGEIPTEIPGLKVRLGKIRIGKPRVRESDRGEREISPMEARLRNLTYAAPLWLTMIPVENNIEAEPEEVYIGDLPIMLKSAIDPISQYTLDKLIEIGEDPKDPGGYFIVNGSERVIVTQEDLAPNRVLVDTGKTGSNITHTAKIISSTAGYRVPVTIERLKDGTFHVSFPAVPGKIPFVILMRALGILTDRDIVYAVSLDPEVQNELFPSLEQASSIANVDDALDFIGSRVAIGQKRENRIEKAQQIIDKYFLPHLGTSAEDRKKKAYYLAYAISKVIELYLGRREPDDKDHYANKRLRLAGDLFASLFRVAFKAFVKDLTYQLEKSKVRGRKLALKALVRPDIVTERIRHALATGNWVGGRTGVSQLLDRTNWLSMLSHLRRVISSLARGQPNFEARDLHGTQWGRMCPFETPEGPNSGLVKNLALMAQIAVGINERIVEKTLYEMGVVPVEEVIRRVTEGGEDQNEYLKWSKVILNGRLIGYYQDGGELANKIRERRRKGEISDEVNVGHIVTDFINEVHVNCDSGRVRRPLIIVSNGNPLVTIEDIEKLESGAITFDDLVRQGKIEYLDAEEEENAYVALEPNDLTPDHTHLEIWSPAILGITASIIPYPEHNQSPRNTYQSAMAKQALGLYAANYQLRTDTRAHLLHYPQRPLVQTRALDIIGYTNRPAGNNAILAVMSFTGYNMEDSIIMNRSSVERGMYRSTFFRLYSTEEVKYPGGQEDKIVMPEAGVRGYKGKEYYRLLEDNGVVSPEVEVKGGDVLIGKVSPPRFLQEFKELSPEQAKRDTSIVTRHGEMGIVDLVLITETAEGNKLVKVRVRDLRIPTIGDKFASRHGQKGVIGMLIPQVDMPYTVKGVVPDIILNPHALPSRMTLGQIMEGIAGKYAALSGNIVDATPFYKTPIEQLQNEILRYGYLPDATEVVYDGRTGQKIKSRIYFGVVYYQKLHHMVADKLHARARGPVQILTRQPTEGRAREGGLRFGEMERDCLIGFGTAMLLKDRLLDNSDRTMIYVCDQCGYIGWYDKNKNKYVCPIHGDKSNLFPVTVSYAFKLLIQELMSMIISPRLVLEDKVGLSGG</sequence>